<organism>
    <name type="scientific">Pithecopus hypochondrialis</name>
    <name type="common">Orange-legged leaf frog</name>
    <name type="synonym">Phyllomedusa hypochondrialis</name>
    <dbReference type="NCBI Taxonomy" id="317381"/>
    <lineage>
        <taxon>Eukaryota</taxon>
        <taxon>Metazoa</taxon>
        <taxon>Chordata</taxon>
        <taxon>Craniata</taxon>
        <taxon>Vertebrata</taxon>
        <taxon>Euteleostomi</taxon>
        <taxon>Amphibia</taxon>
        <taxon>Batrachia</taxon>
        <taxon>Anura</taxon>
        <taxon>Neobatrachia</taxon>
        <taxon>Hyloidea</taxon>
        <taxon>Hylidae</taxon>
        <taxon>Phyllomedusinae</taxon>
        <taxon>Pithecopus</taxon>
    </lineage>
</organism>
<gene>
    <name type="primary">psn6</name>
    <name type="synonym">psn-6</name>
</gene>
<dbReference type="GO" id="GO:0005576">
    <property type="term" value="C:extracellular region"/>
    <property type="evidence" value="ECO:0007669"/>
    <property type="project" value="UniProtKB-SubCell"/>
</dbReference>
<dbReference type="GO" id="GO:0006952">
    <property type="term" value="P:defense response"/>
    <property type="evidence" value="ECO:0007669"/>
    <property type="project" value="UniProtKB-KW"/>
</dbReference>
<sequence length="17" mass="1789">SLIPHAINAVSAIAKHF</sequence>
<name>PLS4_PITHY</name>
<proteinExistence type="evidence at protein level"/>
<accession>P84571</accession>
<evidence type="ECO:0000250" key="1">
    <source>
        <dbReference type="UniProtKB" id="P84566"/>
    </source>
</evidence>
<evidence type="ECO:0000269" key="2">
    <source>
    </source>
</evidence>
<evidence type="ECO:0000303" key="3">
    <source>
    </source>
</evidence>
<evidence type="ECO:0000303" key="4">
    <source>
    </source>
</evidence>
<evidence type="ECO:0000305" key="5"/>
<reference evidence="5" key="1">
    <citation type="journal article" date="2005" name="Peptides">
        <title>Phylloseptins: a novel class of anti-bacterial and anti-protozoan peptides from the Phyllomedusa genus.</title>
        <authorList>
            <person name="Leite J.R.S.A."/>
            <person name="Silva L.P."/>
            <person name="Rodrigues M.I.S."/>
            <person name="Prates M.V."/>
            <person name="Brand G.D."/>
            <person name="Lacava B.M."/>
            <person name="Azevedo R.B."/>
            <person name="Bocca A.L."/>
            <person name="Albuquerque S."/>
            <person name="Bloch C. Jr."/>
        </authorList>
    </citation>
    <scope>PROTEIN SEQUENCE</scope>
    <scope>SUBCELLULAR LOCATION</scope>
    <scope>TISSUE SPECIFICITY</scope>
    <scope>MASS SPECTROMETRY</scope>
    <scope>AMIDATION AT PHE-17</scope>
    <source>
        <tissue evidence="2">Skin secretion</tissue>
    </source>
</reference>
<reference key="2">
    <citation type="journal article" date="2008" name="Peptides">
        <title>A consistent nomenclature of antimicrobial peptides isolated from frogs of the subfamily Phyllomedusinae.</title>
        <authorList>
            <person name="Amiche M."/>
            <person name="Ladram A."/>
            <person name="Nicolas P."/>
        </authorList>
    </citation>
    <scope>NOMENCLATURE</scope>
</reference>
<comment type="function">
    <text evidence="1">Has antimicrobial activity.</text>
</comment>
<comment type="subcellular location">
    <subcellularLocation>
        <location evidence="2">Secreted</location>
    </subcellularLocation>
</comment>
<comment type="tissue specificity">
    <text evidence="2">Expressed by the skin glands.</text>
</comment>
<comment type="mass spectrometry" mass="1788.11" method="MALDI" evidence="2"/>
<comment type="similarity">
    <text evidence="5">Belongs to the frog skin active peptide (FSAP) family. Phylloseptin subfamily.</text>
</comment>
<comment type="online information" name="The antimicrobial peptide database">
    <link uri="https://wangapd3.com/database/query_output.php?ID=00761"/>
</comment>
<protein>
    <recommendedName>
        <fullName evidence="4">Phyllospetin-H4</fullName>
        <shortName evidence="4">PLS-H4</shortName>
    </recommendedName>
    <alternativeName>
        <fullName evidence="3">Phylloseptin-6</fullName>
        <shortName evidence="3">PS-6</shortName>
    </alternativeName>
</protein>
<feature type="peptide" id="PRO_0000043827" description="Phyllospetin-H4">
    <location>
        <begin position="1"/>
        <end position="17"/>
    </location>
</feature>
<feature type="modified residue" description="Phenylalanine amide" evidence="2">
    <location>
        <position position="17"/>
    </location>
</feature>
<keyword id="KW-0027">Amidation</keyword>
<keyword id="KW-0878">Amphibian defense peptide</keyword>
<keyword id="KW-0929">Antimicrobial</keyword>
<keyword id="KW-0903">Direct protein sequencing</keyword>
<keyword id="KW-0964">Secreted</keyword>